<evidence type="ECO:0000250" key="1">
    <source>
        <dbReference type="UniProtKB" id="A1Y9I9"/>
    </source>
</evidence>
<evidence type="ECO:0000250" key="2">
    <source>
        <dbReference type="UniProtKB" id="Q8WZ04"/>
    </source>
</evidence>
<evidence type="ECO:0000255" key="3">
    <source>
        <dbReference type="PROSITE-ProRule" id="PRU01019"/>
    </source>
</evidence>
<evidence type="ECO:0000305" key="4"/>
<evidence type="ECO:0000312" key="5">
    <source>
        <dbReference type="EMBL" id="ACF40903.1"/>
    </source>
</evidence>
<evidence type="ECO:0000312" key="6">
    <source>
        <dbReference type="RGD" id="1561509"/>
    </source>
</evidence>
<reference evidence="5" key="1">
    <citation type="journal article" date="2008" name="Nat. Genet.">
        <title>Mutations of LRTOMT, a fusion gene with alternative reading frames, cause nonsyndromic deafness in humans.</title>
        <authorList>
            <person name="Ahmed Z.M."/>
            <person name="Masmoudi S."/>
            <person name="Kalay E."/>
            <person name="Belyantseva I.A."/>
            <person name="Mosrati M.A."/>
            <person name="Collin R.W.J."/>
            <person name="Riazuddin S."/>
            <person name="Hmani-Aifa M."/>
            <person name="Venselaar H."/>
            <person name="Kawar M.N."/>
            <person name="Tlili A."/>
            <person name="van der Zwaag B."/>
            <person name="Khan S.Y."/>
            <person name="Ayadi L."/>
            <person name="Riazuddin S.A."/>
            <person name="Morell R.J."/>
            <person name="Griffith A.J."/>
            <person name="Charfedine I."/>
            <person name="Caylan R."/>
            <person name="Oostrik J."/>
            <person name="Karaguzel A."/>
            <person name="Ghorbel A."/>
            <person name="Riazuddin S."/>
            <person name="Friedman T.B."/>
            <person name="Ayadi H."/>
            <person name="Kremer H."/>
        </authorList>
    </citation>
    <scope>NUCLEOTIDE SEQUENCE [MRNA]</scope>
    <source>
        <strain evidence="5">Sprague-Dawley</strain>
        <tissue evidence="5">Brain</tissue>
    </source>
</reference>
<proteinExistence type="evidence at transcript level"/>
<accession>B6CZ62</accession>
<gene>
    <name evidence="6" type="primary">Tomt</name>
    <name evidence="1" type="synonym">Comt2</name>
</gene>
<sequence length="258" mass="28864">MSPAIALAFLPLVVTLLVRYRHHFRLLVRTVLLRSFRDCLSGLRIEERAFSYVITHALPGDPGHILTTLDHWSSCCEYLSHMGPIKGQILMRLVEEKAPACVLELGTHCGYSTLLIARALPPGSRLLTVERDSRTAAVAEKVIRLAGFDEQMVELIAGSSEEVIPRLRAQHQLNRADLVLLAHRPRYYLRDLQLLEAHALLPHGATVLADHVLFPGAPRFLQYTKSCGRYRCRLHHTSLPDFPAIKDGIAQLTYTGPG</sequence>
<keyword id="KW-0128">Catecholamine metabolism</keyword>
<keyword id="KW-0963">Cytoplasm</keyword>
<keyword id="KW-0209">Deafness</keyword>
<keyword id="KW-0256">Endoplasmic reticulum</keyword>
<keyword id="KW-1009">Hearing</keyword>
<keyword id="KW-0489">Methyltransferase</keyword>
<keyword id="KW-0531">Neurotransmitter degradation</keyword>
<keyword id="KW-1185">Reference proteome</keyword>
<keyword id="KW-0949">S-adenosyl-L-methionine</keyword>
<keyword id="KW-0808">Transferase</keyword>
<comment type="function">
    <text evidence="1 2">Catalyzes the O-methylation, and thereby the inactivation, of catecholamine neurotransmitters and catechol hormones (By similarity). Required for auditory function (By similarity). Component of the cochlear hair cell's mechanotransduction (MET) machinery. Involved in the assembly of the asymmetric tip-link MET complex. Required for transportation of TMC1 and TMC2 proteins into the mechanically sensitive stereocilia of the hair cells. The function in MET is independent of the enzymatic activity (By similarity).</text>
</comment>
<comment type="catalytic activity">
    <reaction evidence="1">
        <text>a catechol + S-adenosyl-L-methionine = a guaiacol + S-adenosyl-L-homocysteine + H(+)</text>
        <dbReference type="Rhea" id="RHEA:17877"/>
        <dbReference type="ChEBI" id="CHEBI:15378"/>
        <dbReference type="ChEBI" id="CHEBI:33566"/>
        <dbReference type="ChEBI" id="CHEBI:57856"/>
        <dbReference type="ChEBI" id="CHEBI:59789"/>
        <dbReference type="ChEBI" id="CHEBI:134251"/>
        <dbReference type="EC" id="2.1.1.6"/>
    </reaction>
    <physiologicalReaction direction="left-to-right" evidence="1">
        <dbReference type="Rhea" id="RHEA:17878"/>
    </physiologicalReaction>
</comment>
<comment type="subunit">
    <text evidence="1">Interacts with LHFPL5, PCDH15, TMC1, TMC2 and TMIE. Interacts directly with TMC1. The interaction of TOMT with TMC1 and TMC2 is required for the transportation of TMC1/2 into the stereocilia of hair cells.</text>
</comment>
<comment type="subcellular location">
    <subcellularLocation>
        <location evidence="1">Cytoplasm</location>
    </subcellularLocation>
    <subcellularLocation>
        <location evidence="1">Endoplasmic reticulum</location>
    </subcellularLocation>
    <text evidence="1">Localized to the cell body of the cochlear hair cells, but is not present in the stereocilia. Present but not restricted to the apical cistern, Hensen's body and the subsurface cistern.</text>
</comment>
<comment type="similarity">
    <text evidence="3">Belongs to the class I-like SAM-binding methyltransferase superfamily. Cation-dependent O-methyltransferase family.</text>
</comment>
<comment type="caution">
    <text evidence="4">Despite its name, the rat TOMT protein does not contain a transmembrane region in contrast to primate orthologs.</text>
</comment>
<name>TOMT_RAT</name>
<organism>
    <name type="scientific">Rattus norvegicus</name>
    <name type="common">Rat</name>
    <dbReference type="NCBI Taxonomy" id="10116"/>
    <lineage>
        <taxon>Eukaryota</taxon>
        <taxon>Metazoa</taxon>
        <taxon>Chordata</taxon>
        <taxon>Craniata</taxon>
        <taxon>Vertebrata</taxon>
        <taxon>Euteleostomi</taxon>
        <taxon>Mammalia</taxon>
        <taxon>Eutheria</taxon>
        <taxon>Euarchontoglires</taxon>
        <taxon>Glires</taxon>
        <taxon>Rodentia</taxon>
        <taxon>Myomorpha</taxon>
        <taxon>Muroidea</taxon>
        <taxon>Muridae</taxon>
        <taxon>Murinae</taxon>
        <taxon>Rattus</taxon>
    </lineage>
</organism>
<protein>
    <recommendedName>
        <fullName evidence="6">Transmembrane O-methyltransferase homolog</fullName>
        <ecNumber evidence="1">2.1.1.6</ecNumber>
    </recommendedName>
    <alternativeName>
        <fullName evidence="1">Catechol O-methyltransferase 2</fullName>
    </alternativeName>
</protein>
<feature type="chain" id="PRO_0000372489" description="Transmembrane O-methyltransferase homolog">
    <location>
        <begin position="1"/>
        <end position="258"/>
    </location>
</feature>
<feature type="binding site" evidence="3">
    <location>
        <position position="104"/>
    </location>
    <ligand>
        <name>S-adenosyl-L-methionine</name>
        <dbReference type="ChEBI" id="CHEBI:59789"/>
    </ligand>
</feature>
<feature type="binding site" evidence="3">
    <location>
        <begin position="106"/>
        <end position="107"/>
    </location>
    <ligand>
        <name>S-adenosyl-L-methionine</name>
        <dbReference type="ChEBI" id="CHEBI:59789"/>
    </ligand>
</feature>
<feature type="binding site" evidence="3">
    <location>
        <position position="112"/>
    </location>
    <ligand>
        <name>S-adenosyl-L-methionine</name>
        <dbReference type="ChEBI" id="CHEBI:59789"/>
    </ligand>
</feature>
<feature type="binding site" evidence="3">
    <location>
        <position position="130"/>
    </location>
    <ligand>
        <name>S-adenosyl-L-methionine</name>
        <dbReference type="ChEBI" id="CHEBI:59789"/>
    </ligand>
</feature>
<feature type="binding site" evidence="3">
    <location>
        <position position="160"/>
    </location>
    <ligand>
        <name>S-adenosyl-L-methionine</name>
        <dbReference type="ChEBI" id="CHEBI:59789"/>
    </ligand>
</feature>
<dbReference type="EC" id="2.1.1.6" evidence="1"/>
<dbReference type="EMBL" id="EU627093">
    <property type="protein sequence ID" value="ACF40903.1"/>
    <property type="molecule type" value="mRNA"/>
</dbReference>
<dbReference type="RefSeq" id="NP_001132966.1">
    <property type="nucleotide sequence ID" value="NM_001139494.1"/>
</dbReference>
<dbReference type="RefSeq" id="XP_017444679.1">
    <property type="nucleotide sequence ID" value="XM_017589190.1"/>
</dbReference>
<dbReference type="RefSeq" id="XP_017444680.1">
    <property type="nucleotide sequence ID" value="XM_017589191.1"/>
</dbReference>
<dbReference type="SMR" id="B6CZ62"/>
<dbReference type="FunCoup" id="B6CZ62">
    <property type="interactions" value="5"/>
</dbReference>
<dbReference type="STRING" id="10116.ENSRNOP00000036144"/>
<dbReference type="PhosphoSitePlus" id="B6CZ62"/>
<dbReference type="PaxDb" id="10116-ENSRNOP00000036144"/>
<dbReference type="Ensembl" id="ENSRNOT00000039564.5">
    <property type="protein sequence ID" value="ENSRNOP00000036144.4"/>
    <property type="gene ID" value="ENSRNOG00000023434.5"/>
</dbReference>
<dbReference type="GeneID" id="308868"/>
<dbReference type="KEGG" id="rno:308868"/>
<dbReference type="AGR" id="RGD:1561509"/>
<dbReference type="CTD" id="220074"/>
<dbReference type="RGD" id="1561509">
    <property type="gene designation" value="Tomt"/>
</dbReference>
<dbReference type="eggNOG" id="KOG1663">
    <property type="taxonomic scope" value="Eukaryota"/>
</dbReference>
<dbReference type="GeneTree" id="ENSGT00940000161220"/>
<dbReference type="HOGENOM" id="CLU_050461_5_0_1"/>
<dbReference type="InParanoid" id="B6CZ62"/>
<dbReference type="OMA" id="KWRVHRT"/>
<dbReference type="OrthoDB" id="186626at2759"/>
<dbReference type="PhylomeDB" id="B6CZ62"/>
<dbReference type="TreeFam" id="TF329140"/>
<dbReference type="Reactome" id="R-RNO-379397">
    <property type="pathway name" value="Enzymatic degradation of dopamine by COMT"/>
</dbReference>
<dbReference type="PRO" id="PR:B6CZ62"/>
<dbReference type="Proteomes" id="UP000002494">
    <property type="component" value="Chromosome 1"/>
</dbReference>
<dbReference type="Bgee" id="ENSRNOG00000023434">
    <property type="expression patterns" value="Expressed in thymus and 17 other cell types or tissues"/>
</dbReference>
<dbReference type="GO" id="GO:0045177">
    <property type="term" value="C:apical part of cell"/>
    <property type="evidence" value="ECO:0000250"/>
    <property type="project" value="UniProtKB"/>
</dbReference>
<dbReference type="GO" id="GO:0005737">
    <property type="term" value="C:cytoplasm"/>
    <property type="evidence" value="ECO:0000250"/>
    <property type="project" value="UniProtKB"/>
</dbReference>
<dbReference type="GO" id="GO:0005783">
    <property type="term" value="C:endoplasmic reticulum"/>
    <property type="evidence" value="ECO:0000250"/>
    <property type="project" value="UniProtKB"/>
</dbReference>
<dbReference type="GO" id="GO:0016206">
    <property type="term" value="F:catechol O-methyltransferase activity"/>
    <property type="evidence" value="ECO:0000250"/>
    <property type="project" value="UniProtKB"/>
</dbReference>
<dbReference type="GO" id="GO:0060117">
    <property type="term" value="P:auditory receptor cell development"/>
    <property type="evidence" value="ECO:0000266"/>
    <property type="project" value="RGD"/>
</dbReference>
<dbReference type="GO" id="GO:0042424">
    <property type="term" value="P:catecholamine catabolic process"/>
    <property type="evidence" value="ECO:0000250"/>
    <property type="project" value="UniProtKB"/>
</dbReference>
<dbReference type="GO" id="GO:0032502">
    <property type="term" value="P:developmental process"/>
    <property type="evidence" value="ECO:0000318"/>
    <property type="project" value="GO_Central"/>
</dbReference>
<dbReference type="GO" id="GO:0042417">
    <property type="term" value="P:dopamine metabolic process"/>
    <property type="evidence" value="ECO:0000318"/>
    <property type="project" value="GO_Central"/>
</dbReference>
<dbReference type="GO" id="GO:0032259">
    <property type="term" value="P:methylation"/>
    <property type="evidence" value="ECO:0007669"/>
    <property type="project" value="UniProtKB-KW"/>
</dbReference>
<dbReference type="GO" id="GO:1904591">
    <property type="term" value="P:positive regulation of protein import"/>
    <property type="evidence" value="ECO:0000266"/>
    <property type="project" value="RGD"/>
</dbReference>
<dbReference type="GO" id="GO:0007605">
    <property type="term" value="P:sensory perception of sound"/>
    <property type="evidence" value="ECO:0000266"/>
    <property type="project" value="RGD"/>
</dbReference>
<dbReference type="CDD" id="cd02440">
    <property type="entry name" value="AdoMet_MTases"/>
    <property type="match status" value="1"/>
</dbReference>
<dbReference type="FunFam" id="3.40.50.150:FF:000054">
    <property type="entry name" value="Catechol O-methyltransferase"/>
    <property type="match status" value="1"/>
</dbReference>
<dbReference type="Gene3D" id="3.40.50.150">
    <property type="entry name" value="Vaccinia Virus protein VP39"/>
    <property type="match status" value="1"/>
</dbReference>
<dbReference type="InterPro" id="IPR029063">
    <property type="entry name" value="SAM-dependent_MTases_sf"/>
</dbReference>
<dbReference type="InterPro" id="IPR002935">
    <property type="entry name" value="SAM_O-MeTrfase"/>
</dbReference>
<dbReference type="PANTHER" id="PTHR43836">
    <property type="entry name" value="CATECHOL O-METHYLTRANSFERASE 1-RELATED"/>
    <property type="match status" value="1"/>
</dbReference>
<dbReference type="PANTHER" id="PTHR43836:SF1">
    <property type="entry name" value="TRANSMEMBRANE O-METHYLTRANSFERASE"/>
    <property type="match status" value="1"/>
</dbReference>
<dbReference type="Pfam" id="PF01596">
    <property type="entry name" value="Methyltransf_3"/>
    <property type="match status" value="1"/>
</dbReference>
<dbReference type="SUPFAM" id="SSF53335">
    <property type="entry name" value="S-adenosyl-L-methionine-dependent methyltransferases"/>
    <property type="match status" value="1"/>
</dbReference>
<dbReference type="PROSITE" id="PS51682">
    <property type="entry name" value="SAM_OMT_I"/>
    <property type="match status" value="1"/>
</dbReference>